<accession>Q2YWW3</accession>
<dbReference type="EMBL" id="AJ938182">
    <property type="protein sequence ID" value="CAI80525.1"/>
    <property type="molecule type" value="Genomic_DNA"/>
</dbReference>
<dbReference type="RefSeq" id="WP_000670752.1">
    <property type="nucleotide sequence ID" value="NC_007622.1"/>
</dbReference>
<dbReference type="SMR" id="Q2YWW3"/>
<dbReference type="KEGG" id="sab:SAB0837"/>
<dbReference type="HOGENOM" id="CLU_028458_3_1_9"/>
<dbReference type="GO" id="GO:0018773">
    <property type="term" value="F:acetylpyruvate hydrolase activity"/>
    <property type="evidence" value="ECO:0007669"/>
    <property type="project" value="TreeGrafter"/>
</dbReference>
<dbReference type="GO" id="GO:0046872">
    <property type="term" value="F:metal ion binding"/>
    <property type="evidence" value="ECO:0007669"/>
    <property type="project" value="UniProtKB-KW"/>
</dbReference>
<dbReference type="FunFam" id="3.90.850.10:FF:000010">
    <property type="entry name" value="FAA hydrolase family protein"/>
    <property type="match status" value="1"/>
</dbReference>
<dbReference type="Gene3D" id="3.90.850.10">
    <property type="entry name" value="Fumarylacetoacetase-like, C-terminal domain"/>
    <property type="match status" value="1"/>
</dbReference>
<dbReference type="InterPro" id="IPR011234">
    <property type="entry name" value="Fumarylacetoacetase-like_C"/>
</dbReference>
<dbReference type="InterPro" id="IPR036663">
    <property type="entry name" value="Fumarylacetoacetase_C_sf"/>
</dbReference>
<dbReference type="PANTHER" id="PTHR11820">
    <property type="entry name" value="ACYLPYRUVASE"/>
    <property type="match status" value="1"/>
</dbReference>
<dbReference type="PANTHER" id="PTHR11820:SF7">
    <property type="entry name" value="ACYLPYRUVASE FAHD1, MITOCHONDRIAL"/>
    <property type="match status" value="1"/>
</dbReference>
<dbReference type="Pfam" id="PF01557">
    <property type="entry name" value="FAA_hydrolase"/>
    <property type="match status" value="1"/>
</dbReference>
<dbReference type="SUPFAM" id="SSF56529">
    <property type="entry name" value="FAH"/>
    <property type="match status" value="1"/>
</dbReference>
<organism>
    <name type="scientific">Staphylococcus aureus (strain bovine RF122 / ET3-1)</name>
    <dbReference type="NCBI Taxonomy" id="273036"/>
    <lineage>
        <taxon>Bacteria</taxon>
        <taxon>Bacillati</taxon>
        <taxon>Bacillota</taxon>
        <taxon>Bacilli</taxon>
        <taxon>Bacillales</taxon>
        <taxon>Staphylococcaceae</taxon>
        <taxon>Staphylococcus</taxon>
    </lineage>
</organism>
<reference key="1">
    <citation type="journal article" date="2007" name="PLoS ONE">
        <title>Molecular correlates of host specialization in Staphylococcus aureus.</title>
        <authorList>
            <person name="Herron-Olson L."/>
            <person name="Fitzgerald J.R."/>
            <person name="Musser J.M."/>
            <person name="Kapur V."/>
        </authorList>
    </citation>
    <scope>NUCLEOTIDE SEQUENCE [LARGE SCALE GENOMIC DNA]</scope>
    <source>
        <strain>bovine RF122 / ET3-1</strain>
    </source>
</reference>
<keyword id="KW-0479">Metal-binding</keyword>
<sequence length="300" mass="33113">MKFLSFKYNDKTSYGVKVKREDAVWDLTQVFADFAEGDFHPKTLLAGLQQNHTLDFQEQVRKAVVAAEDSGKAEDYKISFNDIEFLPPVTPPNNVIAFGRNYKDHANELNHEVEKLYVFTKAASSLTGDNATIPNHKDITDQLDYEGELGIVIGKSGEKIPKALALDYVYGYTIINDITDRKAQSEQDQAFLSKSLTGGCPMGPYIVTKDELPLPENVNIVTKVNNEIRQDGNTGEMILKIDELIEEISKYVALHPGDIIATGTPAGVGAGMQPPKFLQPGDEVKVTIDNIGTLTTYIAK</sequence>
<name>Y837_STAAB</name>
<protein>
    <recommendedName>
        <fullName>Uncharacterized protein SAB0837</fullName>
    </recommendedName>
</protein>
<proteinExistence type="inferred from homology"/>
<gene>
    <name type="ordered locus">SAB0837</name>
</gene>
<evidence type="ECO:0000250" key="1"/>
<evidence type="ECO:0000305" key="2"/>
<comment type="similarity">
    <text evidence="2">Belongs to the FAH family.</text>
</comment>
<feature type="chain" id="PRO_0000303217" description="Uncharacterized protein SAB0837">
    <location>
        <begin position="1"/>
        <end position="300"/>
    </location>
</feature>
<feature type="binding site" evidence="1">
    <location>
        <position position="146"/>
    </location>
    <ligand>
        <name>a divalent metal cation</name>
        <dbReference type="ChEBI" id="CHEBI:60240"/>
    </ligand>
</feature>
<feature type="binding site" evidence="1">
    <location>
        <position position="148"/>
    </location>
    <ligand>
        <name>a divalent metal cation</name>
        <dbReference type="ChEBI" id="CHEBI:60240"/>
    </ligand>
</feature>
<feature type="binding site" evidence="1">
    <location>
        <position position="177"/>
    </location>
    <ligand>
        <name>a divalent metal cation</name>
        <dbReference type="ChEBI" id="CHEBI:60240"/>
    </ligand>
</feature>